<name>RNFA_ACTPJ</name>
<comment type="function">
    <text evidence="1">Part of a membrane-bound complex that couples electron transfer with translocation of ions across the membrane.</text>
</comment>
<comment type="subunit">
    <text evidence="1">The complex is composed of six subunits: RnfA, RnfB, RnfC, RnfD, RnfE and RnfG.</text>
</comment>
<comment type="subcellular location">
    <subcellularLocation>
        <location evidence="1">Cell inner membrane</location>
        <topology evidence="1">Multi-pass membrane protein</topology>
    </subcellularLocation>
</comment>
<comment type="similarity">
    <text evidence="1">Belongs to the NqrDE/RnfAE family.</text>
</comment>
<accession>B0BS70</accession>
<reference key="1">
    <citation type="journal article" date="2008" name="PLoS ONE">
        <title>Genome biology of Actinobacillus pleuropneumoniae JL03, an isolate of serotype 3 prevalent in China.</title>
        <authorList>
            <person name="Xu Z."/>
            <person name="Zhou Y."/>
            <person name="Li L."/>
            <person name="Zhou R."/>
            <person name="Xiao S."/>
            <person name="Wan Y."/>
            <person name="Zhang S."/>
            <person name="Wang K."/>
            <person name="Li W."/>
            <person name="Li L."/>
            <person name="Jin H."/>
            <person name="Kang M."/>
            <person name="Dalai B."/>
            <person name="Li T."/>
            <person name="Liu L."/>
            <person name="Cheng Y."/>
            <person name="Zhang L."/>
            <person name="Xu T."/>
            <person name="Zheng H."/>
            <person name="Pu S."/>
            <person name="Wang B."/>
            <person name="Gu W."/>
            <person name="Zhang X.L."/>
            <person name="Zhu G.-F."/>
            <person name="Wang S."/>
            <person name="Zhao G.-P."/>
            <person name="Chen H."/>
        </authorList>
    </citation>
    <scope>NUCLEOTIDE SEQUENCE [LARGE SCALE GENOMIC DNA]</scope>
    <source>
        <strain>JL03</strain>
    </source>
</reference>
<organism>
    <name type="scientific">Actinobacillus pleuropneumoniae serotype 3 (strain JL03)</name>
    <dbReference type="NCBI Taxonomy" id="434271"/>
    <lineage>
        <taxon>Bacteria</taxon>
        <taxon>Pseudomonadati</taxon>
        <taxon>Pseudomonadota</taxon>
        <taxon>Gammaproteobacteria</taxon>
        <taxon>Pasteurellales</taxon>
        <taxon>Pasteurellaceae</taxon>
        <taxon>Actinobacillus</taxon>
    </lineage>
</organism>
<sequence>MVDYILLIISTALINNFVLVKFLGLCPFMGVSKKVETAIGMGMATTFVLTVASLSAYLVETYVLIPLEAQFLRTLVFILVIAVIVQLTEMIVHKTSPTLYRLLGIYLPLITTNCAVLGVALLNVNLSNNLVESVLYGFGAALGFSLVLVLFAALRERLAAADVPRPFQGASIALITAGLMSLAFMGFTGLVKI</sequence>
<protein>
    <recommendedName>
        <fullName evidence="1">Ion-translocating oxidoreductase complex subunit A</fullName>
        <ecNumber evidence="1">7.-.-.-</ecNumber>
    </recommendedName>
    <alternativeName>
        <fullName evidence="1">Rnf electron transport complex subunit A</fullName>
    </alternativeName>
</protein>
<proteinExistence type="inferred from homology"/>
<keyword id="KW-0997">Cell inner membrane</keyword>
<keyword id="KW-1003">Cell membrane</keyword>
<keyword id="KW-0249">Electron transport</keyword>
<keyword id="KW-0472">Membrane</keyword>
<keyword id="KW-1278">Translocase</keyword>
<keyword id="KW-0812">Transmembrane</keyword>
<keyword id="KW-1133">Transmembrane helix</keyword>
<keyword id="KW-0813">Transport</keyword>
<feature type="chain" id="PRO_1000191707" description="Ion-translocating oxidoreductase complex subunit A">
    <location>
        <begin position="1"/>
        <end position="193"/>
    </location>
</feature>
<feature type="transmembrane region" description="Helical" evidence="1">
    <location>
        <begin position="5"/>
        <end position="25"/>
    </location>
</feature>
<feature type="transmembrane region" description="Helical" evidence="1">
    <location>
        <begin position="39"/>
        <end position="59"/>
    </location>
</feature>
<feature type="transmembrane region" description="Helical" evidence="1">
    <location>
        <begin position="65"/>
        <end position="85"/>
    </location>
</feature>
<feature type="transmembrane region" description="Helical" evidence="1">
    <location>
        <begin position="102"/>
        <end position="122"/>
    </location>
</feature>
<feature type="transmembrane region" description="Helical" evidence="1">
    <location>
        <begin position="134"/>
        <end position="154"/>
    </location>
</feature>
<feature type="transmembrane region" description="Helical" evidence="1">
    <location>
        <begin position="171"/>
        <end position="191"/>
    </location>
</feature>
<evidence type="ECO:0000255" key="1">
    <source>
        <dbReference type="HAMAP-Rule" id="MF_00459"/>
    </source>
</evidence>
<gene>
    <name evidence="1" type="primary">rnfA</name>
    <name type="ordered locus">APJL_0166</name>
</gene>
<dbReference type="EC" id="7.-.-.-" evidence="1"/>
<dbReference type="EMBL" id="CP000687">
    <property type="protein sequence ID" value="ABY68770.1"/>
    <property type="molecule type" value="Genomic_DNA"/>
</dbReference>
<dbReference type="SMR" id="B0BS70"/>
<dbReference type="KEGG" id="apj:APJL_0166"/>
<dbReference type="HOGENOM" id="CLU_095255_1_0_6"/>
<dbReference type="Proteomes" id="UP000008547">
    <property type="component" value="Chromosome"/>
</dbReference>
<dbReference type="GO" id="GO:0005886">
    <property type="term" value="C:plasma membrane"/>
    <property type="evidence" value="ECO:0007669"/>
    <property type="project" value="UniProtKB-SubCell"/>
</dbReference>
<dbReference type="GO" id="GO:0022900">
    <property type="term" value="P:electron transport chain"/>
    <property type="evidence" value="ECO:0007669"/>
    <property type="project" value="UniProtKB-UniRule"/>
</dbReference>
<dbReference type="HAMAP" id="MF_00459">
    <property type="entry name" value="RsxA_RnfA"/>
    <property type="match status" value="1"/>
</dbReference>
<dbReference type="InterPro" id="IPR011293">
    <property type="entry name" value="Ion_transpt_RnfA/RsxA"/>
</dbReference>
<dbReference type="InterPro" id="IPR003667">
    <property type="entry name" value="NqrDE/RnfAE"/>
</dbReference>
<dbReference type="InterPro" id="IPR050133">
    <property type="entry name" value="NqrDE/RnfAE_oxidrdctase"/>
</dbReference>
<dbReference type="NCBIfam" id="NF003481">
    <property type="entry name" value="PRK05151.1"/>
    <property type="match status" value="1"/>
</dbReference>
<dbReference type="NCBIfam" id="TIGR01943">
    <property type="entry name" value="rnfA"/>
    <property type="match status" value="1"/>
</dbReference>
<dbReference type="PANTHER" id="PTHR30335">
    <property type="entry name" value="INTEGRAL MEMBRANE PROTEIN OF SOXR-REDUCING COMPLEX"/>
    <property type="match status" value="1"/>
</dbReference>
<dbReference type="PANTHER" id="PTHR30335:SF0">
    <property type="entry name" value="ION-TRANSLOCATING OXIDOREDUCTASE COMPLEX SUBUNIT A"/>
    <property type="match status" value="1"/>
</dbReference>
<dbReference type="Pfam" id="PF02508">
    <property type="entry name" value="Rnf-Nqr"/>
    <property type="match status" value="1"/>
</dbReference>
<dbReference type="PIRSF" id="PIRSF006102">
    <property type="entry name" value="NQR_DE"/>
    <property type="match status" value="1"/>
</dbReference>